<protein>
    <recommendedName>
        <fullName evidence="1">Probable tRNA sulfurtransferase</fullName>
        <ecNumber evidence="1">2.8.1.4</ecNumber>
    </recommendedName>
    <alternativeName>
        <fullName evidence="1">Sulfur carrier protein ThiS sulfurtransferase</fullName>
    </alternativeName>
    <alternativeName>
        <fullName evidence="1">Thiamine biosynthesis protein ThiI</fullName>
    </alternativeName>
    <alternativeName>
        <fullName evidence="1">tRNA 4-thiouridine synthase</fullName>
    </alternativeName>
</protein>
<name>THII_LACCB</name>
<proteinExistence type="inferred from homology"/>
<evidence type="ECO:0000255" key="1">
    <source>
        <dbReference type="HAMAP-Rule" id="MF_00021"/>
    </source>
</evidence>
<sequence length="405" mass="45340">MQYSEIMVRYGELSTKGKNRQAFIGRLNGNVTRALHEFPRLTIRPKRDRMHIELNGEPSDQVMARLSQVFGIQNFSPSIAVEKDMDKVHAVALQLMNETAPKGISYKVNTRRSDHDFALDTNAMNLDLGDYLTDKRPDLVVKMHQPDMILRVEVRREAIYLSTKTIQGAGGLPVGTAGKAALMLSGGIDSPVAGYYALKRGVDIEMVHFFSPPYTSQQALNKAKQLTAKLTPYVGRIYFIEVPFTEIQEEIKAKVPEGYLMTVQRRLMLRLTEAIAQQRGDLAIFNGESVGQVASQTLESMAAINDVTTMPIIRPVATMDKNEIIAEAEKIDTYDLSIMPFEDCCTIFAPPSPKTRPKTDRARYYESKIDVAGLMDRALAGVKIQEIKSSDQFMNQDQDVIAELL</sequence>
<reference key="1">
    <citation type="submission" date="2008-06" db="EMBL/GenBank/DDBJ databases">
        <title>Lactobacillus casei BL23 complete genome sequence.</title>
        <authorList>
            <person name="Maze A."/>
            <person name="Boel G."/>
            <person name="Bourand A."/>
            <person name="Loux V."/>
            <person name="Gibrat J.F."/>
            <person name="Zuniga M."/>
            <person name="Hartke A."/>
            <person name="Deutscher J."/>
        </authorList>
    </citation>
    <scope>NUCLEOTIDE SEQUENCE [LARGE SCALE GENOMIC DNA]</scope>
    <source>
        <strain>BL23</strain>
    </source>
</reference>
<accession>B3WDV9</accession>
<keyword id="KW-0067">ATP-binding</keyword>
<keyword id="KW-0963">Cytoplasm</keyword>
<keyword id="KW-0547">Nucleotide-binding</keyword>
<keyword id="KW-0694">RNA-binding</keyword>
<keyword id="KW-0784">Thiamine biosynthesis</keyword>
<keyword id="KW-0808">Transferase</keyword>
<keyword id="KW-0820">tRNA-binding</keyword>
<feature type="chain" id="PRO_1000090018" description="Probable tRNA sulfurtransferase">
    <location>
        <begin position="1"/>
        <end position="405"/>
    </location>
</feature>
<feature type="domain" description="THUMP" evidence="1">
    <location>
        <begin position="60"/>
        <end position="165"/>
    </location>
</feature>
<feature type="binding site" evidence="1">
    <location>
        <begin position="183"/>
        <end position="184"/>
    </location>
    <ligand>
        <name>ATP</name>
        <dbReference type="ChEBI" id="CHEBI:30616"/>
    </ligand>
</feature>
<feature type="binding site" evidence="1">
    <location>
        <begin position="208"/>
        <end position="209"/>
    </location>
    <ligand>
        <name>ATP</name>
        <dbReference type="ChEBI" id="CHEBI:30616"/>
    </ligand>
</feature>
<feature type="binding site" evidence="1">
    <location>
        <position position="265"/>
    </location>
    <ligand>
        <name>ATP</name>
        <dbReference type="ChEBI" id="CHEBI:30616"/>
    </ligand>
</feature>
<feature type="binding site" evidence="1">
    <location>
        <position position="287"/>
    </location>
    <ligand>
        <name>ATP</name>
        <dbReference type="ChEBI" id="CHEBI:30616"/>
    </ligand>
</feature>
<feature type="binding site" evidence="1">
    <location>
        <position position="296"/>
    </location>
    <ligand>
        <name>ATP</name>
        <dbReference type="ChEBI" id="CHEBI:30616"/>
    </ligand>
</feature>
<comment type="function">
    <text evidence="1">Catalyzes the ATP-dependent transfer of a sulfur to tRNA to produce 4-thiouridine in position 8 of tRNAs, which functions as a near-UV photosensor. Also catalyzes the transfer of sulfur to the sulfur carrier protein ThiS, forming ThiS-thiocarboxylate. This is a step in the synthesis of thiazole, in the thiamine biosynthesis pathway. The sulfur is donated as persulfide by IscS.</text>
</comment>
<comment type="catalytic activity">
    <reaction evidence="1">
        <text>[ThiI sulfur-carrier protein]-S-sulfanyl-L-cysteine + a uridine in tRNA + 2 reduced [2Fe-2S]-[ferredoxin] + ATP + H(+) = [ThiI sulfur-carrier protein]-L-cysteine + a 4-thiouridine in tRNA + 2 oxidized [2Fe-2S]-[ferredoxin] + AMP + diphosphate</text>
        <dbReference type="Rhea" id="RHEA:24176"/>
        <dbReference type="Rhea" id="RHEA-COMP:10000"/>
        <dbReference type="Rhea" id="RHEA-COMP:10001"/>
        <dbReference type="Rhea" id="RHEA-COMP:13337"/>
        <dbReference type="Rhea" id="RHEA-COMP:13338"/>
        <dbReference type="Rhea" id="RHEA-COMP:13339"/>
        <dbReference type="Rhea" id="RHEA-COMP:13340"/>
        <dbReference type="ChEBI" id="CHEBI:15378"/>
        <dbReference type="ChEBI" id="CHEBI:29950"/>
        <dbReference type="ChEBI" id="CHEBI:30616"/>
        <dbReference type="ChEBI" id="CHEBI:33019"/>
        <dbReference type="ChEBI" id="CHEBI:33737"/>
        <dbReference type="ChEBI" id="CHEBI:33738"/>
        <dbReference type="ChEBI" id="CHEBI:61963"/>
        <dbReference type="ChEBI" id="CHEBI:65315"/>
        <dbReference type="ChEBI" id="CHEBI:136798"/>
        <dbReference type="ChEBI" id="CHEBI:456215"/>
        <dbReference type="EC" id="2.8.1.4"/>
    </reaction>
</comment>
<comment type="catalytic activity">
    <reaction evidence="1">
        <text>[ThiS sulfur-carrier protein]-C-terminal Gly-Gly-AMP + S-sulfanyl-L-cysteinyl-[cysteine desulfurase] + AH2 = [ThiS sulfur-carrier protein]-C-terminal-Gly-aminoethanethioate + L-cysteinyl-[cysteine desulfurase] + A + AMP + 2 H(+)</text>
        <dbReference type="Rhea" id="RHEA:43340"/>
        <dbReference type="Rhea" id="RHEA-COMP:12157"/>
        <dbReference type="Rhea" id="RHEA-COMP:12158"/>
        <dbReference type="Rhea" id="RHEA-COMP:12910"/>
        <dbReference type="Rhea" id="RHEA-COMP:19908"/>
        <dbReference type="ChEBI" id="CHEBI:13193"/>
        <dbReference type="ChEBI" id="CHEBI:15378"/>
        <dbReference type="ChEBI" id="CHEBI:17499"/>
        <dbReference type="ChEBI" id="CHEBI:29950"/>
        <dbReference type="ChEBI" id="CHEBI:61963"/>
        <dbReference type="ChEBI" id="CHEBI:90618"/>
        <dbReference type="ChEBI" id="CHEBI:232372"/>
        <dbReference type="ChEBI" id="CHEBI:456215"/>
    </reaction>
</comment>
<comment type="pathway">
    <text evidence="1">Cofactor biosynthesis; thiamine diphosphate biosynthesis.</text>
</comment>
<comment type="subcellular location">
    <subcellularLocation>
        <location evidence="1">Cytoplasm</location>
    </subcellularLocation>
</comment>
<comment type="similarity">
    <text evidence="1">Belongs to the ThiI family.</text>
</comment>
<organism>
    <name type="scientific">Lacticaseibacillus casei (strain BL23)</name>
    <name type="common">Lactobacillus casei</name>
    <dbReference type="NCBI Taxonomy" id="543734"/>
    <lineage>
        <taxon>Bacteria</taxon>
        <taxon>Bacillati</taxon>
        <taxon>Bacillota</taxon>
        <taxon>Bacilli</taxon>
        <taxon>Lactobacillales</taxon>
        <taxon>Lactobacillaceae</taxon>
        <taxon>Lacticaseibacillus</taxon>
    </lineage>
</organism>
<gene>
    <name evidence="1" type="primary">thiI</name>
    <name type="ordered locus">LCABL_14790</name>
</gene>
<dbReference type="EC" id="2.8.1.4" evidence="1"/>
<dbReference type="EMBL" id="FM177140">
    <property type="protein sequence ID" value="CAQ66560.1"/>
    <property type="molecule type" value="Genomic_DNA"/>
</dbReference>
<dbReference type="SMR" id="B3WDV9"/>
<dbReference type="KEGG" id="lcb:LCABL_14790"/>
<dbReference type="HOGENOM" id="CLU_037952_4_0_9"/>
<dbReference type="UniPathway" id="UPA00060"/>
<dbReference type="GO" id="GO:0005829">
    <property type="term" value="C:cytosol"/>
    <property type="evidence" value="ECO:0007669"/>
    <property type="project" value="TreeGrafter"/>
</dbReference>
<dbReference type="GO" id="GO:0005524">
    <property type="term" value="F:ATP binding"/>
    <property type="evidence" value="ECO:0007669"/>
    <property type="project" value="UniProtKB-UniRule"/>
</dbReference>
<dbReference type="GO" id="GO:0004810">
    <property type="term" value="F:CCA tRNA nucleotidyltransferase activity"/>
    <property type="evidence" value="ECO:0007669"/>
    <property type="project" value="InterPro"/>
</dbReference>
<dbReference type="GO" id="GO:0000049">
    <property type="term" value="F:tRNA binding"/>
    <property type="evidence" value="ECO:0007669"/>
    <property type="project" value="UniProtKB-UniRule"/>
</dbReference>
<dbReference type="GO" id="GO:0140741">
    <property type="term" value="F:tRNA-uracil-4 sulfurtransferase activity"/>
    <property type="evidence" value="ECO:0007669"/>
    <property type="project" value="UniProtKB-EC"/>
</dbReference>
<dbReference type="GO" id="GO:0009228">
    <property type="term" value="P:thiamine biosynthetic process"/>
    <property type="evidence" value="ECO:0007669"/>
    <property type="project" value="UniProtKB-KW"/>
</dbReference>
<dbReference type="GO" id="GO:0009229">
    <property type="term" value="P:thiamine diphosphate biosynthetic process"/>
    <property type="evidence" value="ECO:0007669"/>
    <property type="project" value="UniProtKB-UniRule"/>
</dbReference>
<dbReference type="GO" id="GO:0052837">
    <property type="term" value="P:thiazole biosynthetic process"/>
    <property type="evidence" value="ECO:0007669"/>
    <property type="project" value="TreeGrafter"/>
</dbReference>
<dbReference type="GO" id="GO:0002937">
    <property type="term" value="P:tRNA 4-thiouridine biosynthesis"/>
    <property type="evidence" value="ECO:0007669"/>
    <property type="project" value="TreeGrafter"/>
</dbReference>
<dbReference type="CDD" id="cd01712">
    <property type="entry name" value="PPase_ThiI"/>
    <property type="match status" value="1"/>
</dbReference>
<dbReference type="CDD" id="cd11716">
    <property type="entry name" value="THUMP_ThiI"/>
    <property type="match status" value="1"/>
</dbReference>
<dbReference type="FunFam" id="3.40.50.620:FF:000053">
    <property type="entry name" value="Probable tRNA sulfurtransferase"/>
    <property type="match status" value="1"/>
</dbReference>
<dbReference type="Gene3D" id="3.30.2130.30">
    <property type="match status" value="1"/>
</dbReference>
<dbReference type="Gene3D" id="3.40.50.620">
    <property type="entry name" value="HUPs"/>
    <property type="match status" value="1"/>
</dbReference>
<dbReference type="HAMAP" id="MF_00021">
    <property type="entry name" value="ThiI"/>
    <property type="match status" value="1"/>
</dbReference>
<dbReference type="InterPro" id="IPR014729">
    <property type="entry name" value="Rossmann-like_a/b/a_fold"/>
</dbReference>
<dbReference type="InterPro" id="IPR020536">
    <property type="entry name" value="ThiI_AANH"/>
</dbReference>
<dbReference type="InterPro" id="IPR054173">
    <property type="entry name" value="ThiI_fer"/>
</dbReference>
<dbReference type="InterPro" id="IPR049961">
    <property type="entry name" value="ThiI_N"/>
</dbReference>
<dbReference type="InterPro" id="IPR004114">
    <property type="entry name" value="THUMP_dom"/>
</dbReference>
<dbReference type="InterPro" id="IPR049962">
    <property type="entry name" value="THUMP_ThiI"/>
</dbReference>
<dbReference type="InterPro" id="IPR003720">
    <property type="entry name" value="tRNA_STrfase"/>
</dbReference>
<dbReference type="InterPro" id="IPR050102">
    <property type="entry name" value="tRNA_sulfurtransferase_ThiI"/>
</dbReference>
<dbReference type="NCBIfam" id="TIGR00342">
    <property type="entry name" value="tRNA uracil 4-sulfurtransferase ThiI"/>
    <property type="match status" value="1"/>
</dbReference>
<dbReference type="PANTHER" id="PTHR43209">
    <property type="entry name" value="TRNA SULFURTRANSFERASE"/>
    <property type="match status" value="1"/>
</dbReference>
<dbReference type="PANTHER" id="PTHR43209:SF1">
    <property type="entry name" value="TRNA SULFURTRANSFERASE"/>
    <property type="match status" value="1"/>
</dbReference>
<dbReference type="Pfam" id="PF02568">
    <property type="entry name" value="ThiI"/>
    <property type="match status" value="1"/>
</dbReference>
<dbReference type="Pfam" id="PF22025">
    <property type="entry name" value="ThiI_fer"/>
    <property type="match status" value="1"/>
</dbReference>
<dbReference type="Pfam" id="PF02926">
    <property type="entry name" value="THUMP"/>
    <property type="match status" value="1"/>
</dbReference>
<dbReference type="SMART" id="SM00981">
    <property type="entry name" value="THUMP"/>
    <property type="match status" value="1"/>
</dbReference>
<dbReference type="SUPFAM" id="SSF52402">
    <property type="entry name" value="Adenine nucleotide alpha hydrolases-like"/>
    <property type="match status" value="1"/>
</dbReference>
<dbReference type="SUPFAM" id="SSF143437">
    <property type="entry name" value="THUMP domain-like"/>
    <property type="match status" value="1"/>
</dbReference>
<dbReference type="PROSITE" id="PS51165">
    <property type="entry name" value="THUMP"/>
    <property type="match status" value="1"/>
</dbReference>